<sequence length="449" mass="49725">MLKYKGLEGKNVLVVGLAKSGYEAAKLLHHLGANVTVNDGGDLSKDPHAKDLEKMGLKVIGGHHPLSLLDSNPIIVKNPGIPYSVPLISEAEKRGLRILTEVELSYLISEAPIIAVTGTNGKTTVTSLIGDMFDKSRQTGLLSGNIGYVASKVAQEAKPEDYLITELSSFQLLGIEQYRPHIAIITNIYSAHLDYHGTLEEYRNAKRRIYKNQTEDDFLICNYNQRHLIETDGLKSKVYYFSTSQEVDGIYVKDGYIMLNGLRLIHKDDIVLPGEHNLENILAAVLAAVLGGVSIDAVIATLTSFSGIKHRLQYIGSNKTNKYYNDSKATNTLATQFALNSFNQPIIWLCGGLDRGNGFDELIPYMKNVRVMITFGETQDKLTKLGESQGKYVIRATDVKDAVDKVQNVIEPNDVVLLSPACASWDQYNTFEERGDIFIESFRAHLPSK</sequence>
<reference key="1">
    <citation type="journal article" date="2009" name="Appl. Environ. Microbiol.">
        <title>Genome analysis of the meat starter culture bacterium Staphylococcus carnosus TM300.</title>
        <authorList>
            <person name="Rosenstein R."/>
            <person name="Nerz C."/>
            <person name="Biswas L."/>
            <person name="Resch A."/>
            <person name="Raddatz G."/>
            <person name="Schuster S.C."/>
            <person name="Goetz F."/>
        </authorList>
    </citation>
    <scope>NUCLEOTIDE SEQUENCE [LARGE SCALE GENOMIC DNA]</scope>
    <source>
        <strain>TM300</strain>
    </source>
</reference>
<gene>
    <name evidence="1" type="primary">murD</name>
    <name type="ordered locus">Sca_0796</name>
</gene>
<organism>
    <name type="scientific">Staphylococcus carnosus (strain TM300)</name>
    <dbReference type="NCBI Taxonomy" id="396513"/>
    <lineage>
        <taxon>Bacteria</taxon>
        <taxon>Bacillati</taxon>
        <taxon>Bacillota</taxon>
        <taxon>Bacilli</taxon>
        <taxon>Bacillales</taxon>
        <taxon>Staphylococcaceae</taxon>
        <taxon>Staphylococcus</taxon>
    </lineage>
</organism>
<dbReference type="EC" id="6.3.2.9" evidence="1"/>
<dbReference type="EMBL" id="AM295250">
    <property type="protein sequence ID" value="CAL27706.1"/>
    <property type="molecule type" value="Genomic_DNA"/>
</dbReference>
<dbReference type="RefSeq" id="WP_015900048.1">
    <property type="nucleotide sequence ID" value="NC_012121.1"/>
</dbReference>
<dbReference type="SMR" id="B9DPR3"/>
<dbReference type="GeneID" id="93795732"/>
<dbReference type="KEGG" id="sca:SCA_0796"/>
<dbReference type="eggNOG" id="COG0771">
    <property type="taxonomic scope" value="Bacteria"/>
</dbReference>
<dbReference type="HOGENOM" id="CLU_032540_0_1_9"/>
<dbReference type="OrthoDB" id="9809796at2"/>
<dbReference type="BioCyc" id="SCAR396513:SCA_RS04035-MONOMER"/>
<dbReference type="UniPathway" id="UPA00219"/>
<dbReference type="Proteomes" id="UP000000444">
    <property type="component" value="Chromosome"/>
</dbReference>
<dbReference type="GO" id="GO:0005737">
    <property type="term" value="C:cytoplasm"/>
    <property type="evidence" value="ECO:0007669"/>
    <property type="project" value="UniProtKB-SubCell"/>
</dbReference>
<dbReference type="GO" id="GO:0005524">
    <property type="term" value="F:ATP binding"/>
    <property type="evidence" value="ECO:0007669"/>
    <property type="project" value="UniProtKB-UniRule"/>
</dbReference>
<dbReference type="GO" id="GO:0008764">
    <property type="term" value="F:UDP-N-acetylmuramoylalanine-D-glutamate ligase activity"/>
    <property type="evidence" value="ECO:0007669"/>
    <property type="project" value="UniProtKB-UniRule"/>
</dbReference>
<dbReference type="GO" id="GO:0051301">
    <property type="term" value="P:cell division"/>
    <property type="evidence" value="ECO:0007669"/>
    <property type="project" value="UniProtKB-KW"/>
</dbReference>
<dbReference type="GO" id="GO:0071555">
    <property type="term" value="P:cell wall organization"/>
    <property type="evidence" value="ECO:0007669"/>
    <property type="project" value="UniProtKB-KW"/>
</dbReference>
<dbReference type="GO" id="GO:0009252">
    <property type="term" value="P:peptidoglycan biosynthetic process"/>
    <property type="evidence" value="ECO:0007669"/>
    <property type="project" value="UniProtKB-UniRule"/>
</dbReference>
<dbReference type="GO" id="GO:0008360">
    <property type="term" value="P:regulation of cell shape"/>
    <property type="evidence" value="ECO:0007669"/>
    <property type="project" value="UniProtKB-KW"/>
</dbReference>
<dbReference type="Gene3D" id="3.90.190.20">
    <property type="entry name" value="Mur ligase, C-terminal domain"/>
    <property type="match status" value="1"/>
</dbReference>
<dbReference type="Gene3D" id="3.40.1190.10">
    <property type="entry name" value="Mur-like, catalytic domain"/>
    <property type="match status" value="1"/>
</dbReference>
<dbReference type="Gene3D" id="3.40.50.720">
    <property type="entry name" value="NAD(P)-binding Rossmann-like Domain"/>
    <property type="match status" value="1"/>
</dbReference>
<dbReference type="HAMAP" id="MF_00639">
    <property type="entry name" value="MurD"/>
    <property type="match status" value="1"/>
</dbReference>
<dbReference type="InterPro" id="IPR036565">
    <property type="entry name" value="Mur-like_cat_sf"/>
</dbReference>
<dbReference type="InterPro" id="IPR004101">
    <property type="entry name" value="Mur_ligase_C"/>
</dbReference>
<dbReference type="InterPro" id="IPR036615">
    <property type="entry name" value="Mur_ligase_C_dom_sf"/>
</dbReference>
<dbReference type="InterPro" id="IPR013221">
    <property type="entry name" value="Mur_ligase_cen"/>
</dbReference>
<dbReference type="InterPro" id="IPR005762">
    <property type="entry name" value="MurD"/>
</dbReference>
<dbReference type="NCBIfam" id="TIGR01087">
    <property type="entry name" value="murD"/>
    <property type="match status" value="1"/>
</dbReference>
<dbReference type="PANTHER" id="PTHR43692">
    <property type="entry name" value="UDP-N-ACETYLMURAMOYLALANINE--D-GLUTAMATE LIGASE"/>
    <property type="match status" value="1"/>
</dbReference>
<dbReference type="PANTHER" id="PTHR43692:SF1">
    <property type="entry name" value="UDP-N-ACETYLMURAMOYLALANINE--D-GLUTAMATE LIGASE"/>
    <property type="match status" value="1"/>
</dbReference>
<dbReference type="Pfam" id="PF02875">
    <property type="entry name" value="Mur_ligase_C"/>
    <property type="match status" value="1"/>
</dbReference>
<dbReference type="Pfam" id="PF08245">
    <property type="entry name" value="Mur_ligase_M"/>
    <property type="match status" value="1"/>
</dbReference>
<dbReference type="Pfam" id="PF21799">
    <property type="entry name" value="MurD-like_N"/>
    <property type="match status" value="1"/>
</dbReference>
<dbReference type="SUPFAM" id="SSF51984">
    <property type="entry name" value="MurCD N-terminal domain"/>
    <property type="match status" value="1"/>
</dbReference>
<dbReference type="SUPFAM" id="SSF53623">
    <property type="entry name" value="MurD-like peptide ligases, catalytic domain"/>
    <property type="match status" value="1"/>
</dbReference>
<dbReference type="SUPFAM" id="SSF53244">
    <property type="entry name" value="MurD-like peptide ligases, peptide-binding domain"/>
    <property type="match status" value="1"/>
</dbReference>
<accession>B9DPR3</accession>
<feature type="chain" id="PRO_1000147412" description="UDP-N-acetylmuramoylalanine--D-glutamate ligase">
    <location>
        <begin position="1"/>
        <end position="449"/>
    </location>
</feature>
<feature type="binding site" evidence="1">
    <location>
        <begin position="118"/>
        <end position="124"/>
    </location>
    <ligand>
        <name>ATP</name>
        <dbReference type="ChEBI" id="CHEBI:30616"/>
    </ligand>
</feature>
<name>MURD_STACT</name>
<evidence type="ECO:0000255" key="1">
    <source>
        <dbReference type="HAMAP-Rule" id="MF_00639"/>
    </source>
</evidence>
<proteinExistence type="inferred from homology"/>
<protein>
    <recommendedName>
        <fullName evidence="1">UDP-N-acetylmuramoylalanine--D-glutamate ligase</fullName>
        <ecNumber evidence="1">6.3.2.9</ecNumber>
    </recommendedName>
    <alternativeName>
        <fullName evidence="1">D-glutamic acid-adding enzyme</fullName>
    </alternativeName>
    <alternativeName>
        <fullName evidence="1">UDP-N-acetylmuramoyl-L-alanyl-D-glutamate synthetase</fullName>
    </alternativeName>
</protein>
<comment type="function">
    <text evidence="1">Cell wall formation. Catalyzes the addition of glutamate to the nucleotide precursor UDP-N-acetylmuramoyl-L-alanine (UMA).</text>
</comment>
<comment type="catalytic activity">
    <reaction evidence="1">
        <text>UDP-N-acetyl-alpha-D-muramoyl-L-alanine + D-glutamate + ATP = UDP-N-acetyl-alpha-D-muramoyl-L-alanyl-D-glutamate + ADP + phosphate + H(+)</text>
        <dbReference type="Rhea" id="RHEA:16429"/>
        <dbReference type="ChEBI" id="CHEBI:15378"/>
        <dbReference type="ChEBI" id="CHEBI:29986"/>
        <dbReference type="ChEBI" id="CHEBI:30616"/>
        <dbReference type="ChEBI" id="CHEBI:43474"/>
        <dbReference type="ChEBI" id="CHEBI:83898"/>
        <dbReference type="ChEBI" id="CHEBI:83900"/>
        <dbReference type="ChEBI" id="CHEBI:456216"/>
        <dbReference type="EC" id="6.3.2.9"/>
    </reaction>
</comment>
<comment type="pathway">
    <text evidence="1">Cell wall biogenesis; peptidoglycan biosynthesis.</text>
</comment>
<comment type="subcellular location">
    <subcellularLocation>
        <location evidence="1">Cytoplasm</location>
    </subcellularLocation>
</comment>
<comment type="similarity">
    <text evidence="1">Belongs to the MurCDEF family.</text>
</comment>
<keyword id="KW-0067">ATP-binding</keyword>
<keyword id="KW-0131">Cell cycle</keyword>
<keyword id="KW-0132">Cell division</keyword>
<keyword id="KW-0133">Cell shape</keyword>
<keyword id="KW-0961">Cell wall biogenesis/degradation</keyword>
<keyword id="KW-0963">Cytoplasm</keyword>
<keyword id="KW-0436">Ligase</keyword>
<keyword id="KW-0547">Nucleotide-binding</keyword>
<keyword id="KW-0573">Peptidoglycan synthesis</keyword>
<keyword id="KW-1185">Reference proteome</keyword>